<protein>
    <recommendedName>
        <fullName>Major pollen allergen Pla l 1</fullName>
    </recommendedName>
    <allergenName>Pla l 1</allergenName>
</protein>
<dbReference type="EMBL" id="AJ313166">
    <property type="protein sequence ID" value="CAC41633.1"/>
    <property type="molecule type" value="mRNA"/>
</dbReference>
<dbReference type="EMBL" id="AJ313167">
    <property type="protein sequence ID" value="CAC41634.1"/>
    <property type="molecule type" value="mRNA"/>
</dbReference>
<dbReference type="EMBL" id="AJ313168">
    <property type="protein sequence ID" value="CAC41635.1"/>
    <property type="molecule type" value="mRNA"/>
</dbReference>
<dbReference type="PDB" id="4Z8W">
    <property type="method" value="X-ray"/>
    <property type="resolution" value="1.98 A"/>
    <property type="chains" value="A=1-131"/>
</dbReference>
<dbReference type="PDBsum" id="4Z8W"/>
<dbReference type="SMR" id="P82242"/>
<dbReference type="Allergome" id="1323">
    <property type="allergen name" value="Pla l 1.0101"/>
</dbReference>
<dbReference type="Allergome" id="1324">
    <property type="allergen name" value="Pla l 1.0102"/>
</dbReference>
<dbReference type="Allergome" id="1325">
    <property type="allergen name" value="Pla l 1.0103"/>
</dbReference>
<dbReference type="Allergome" id="574">
    <property type="allergen name" value="Pla l 1"/>
</dbReference>
<dbReference type="GO" id="GO:0005576">
    <property type="term" value="C:extracellular region"/>
    <property type="evidence" value="ECO:0007669"/>
    <property type="project" value="UniProtKB-SubCell"/>
</dbReference>
<dbReference type="GO" id="GO:0008270">
    <property type="term" value="F:zinc ion binding"/>
    <property type="evidence" value="ECO:0000314"/>
    <property type="project" value="UniProtKB"/>
</dbReference>
<dbReference type="InterPro" id="IPR006041">
    <property type="entry name" value="Pollen_Ole_e1_allergen"/>
</dbReference>
<dbReference type="PANTHER" id="PTHR31614:SF24">
    <property type="entry name" value="OLEE1-LIKE PROTEIN"/>
    <property type="match status" value="1"/>
</dbReference>
<dbReference type="PANTHER" id="PTHR31614">
    <property type="entry name" value="PROTEIN DOWNSTREAM OF FLC-RELATED"/>
    <property type="match status" value="1"/>
</dbReference>
<dbReference type="Pfam" id="PF01190">
    <property type="entry name" value="Pollen_Ole_e_1"/>
    <property type="match status" value="1"/>
</dbReference>
<evidence type="ECO:0000269" key="1">
    <source>
    </source>
</evidence>
<evidence type="ECO:0000305" key="2"/>
<evidence type="ECO:0007744" key="3">
    <source>
        <dbReference type="PDB" id="4Z8W"/>
    </source>
</evidence>
<evidence type="ECO:0007829" key="4">
    <source>
        <dbReference type="PDB" id="4Z8W"/>
    </source>
</evidence>
<organism>
    <name type="scientific">Plantago lanceolata</name>
    <name type="common">English plantain</name>
    <name type="synonym">Ribwort plantain</name>
    <dbReference type="NCBI Taxonomy" id="39414"/>
    <lineage>
        <taxon>Eukaryota</taxon>
        <taxon>Viridiplantae</taxon>
        <taxon>Streptophyta</taxon>
        <taxon>Embryophyta</taxon>
        <taxon>Tracheophyta</taxon>
        <taxon>Spermatophyta</taxon>
        <taxon>Magnoliopsida</taxon>
        <taxon>eudicotyledons</taxon>
        <taxon>Gunneridae</taxon>
        <taxon>Pentapetalae</taxon>
        <taxon>asterids</taxon>
        <taxon>lamiids</taxon>
        <taxon>Lamiales</taxon>
        <taxon>Plantaginaceae</taxon>
        <taxon>Plantagineae</taxon>
        <taxon>Plantago</taxon>
    </lineage>
</organism>
<accession>P82242</accession>
<accession>Q93X26</accession>
<accession>Q949A3</accession>
<accession>Q949A4</accession>
<comment type="subcellular location">
    <subcellularLocation>
        <location>Secreted</location>
    </subcellularLocation>
</comment>
<comment type="PTM">
    <text>Exists in two variants: glycosylated and non-glycosylated. Carries a complex, major N-linked glycan, with a alpha-1,3-fucose residue in its structure and probably also a beta-1,2-xylose. The average modification of molecular mass due to glycosylation is approximately 969 Da.</text>
</comment>
<comment type="allergen">
    <text>Causes an allergic reaction in human. Binds to IgE. The English plantain pollen is an important cause of pollinosis in the temperate regions of North America, Australia and Europe. The glycan moiety does not seem to constitute a relevant allergenic epitope.</text>
</comment>
<comment type="similarity">
    <text evidence="2">Belongs to the Ole e I family.</text>
</comment>
<sequence length="131" mass="14521">TQTSHPAKFHVEGEVYCNVCHSRNLINELSERMAGAQVQLDCKDDSKKVIYSIGGETDQDGVYRLPVVGYHEDCEIKLVKSSRPDCSEIPKLAKGTIQTSKVDLSKNTTITEKTRHVKPLSFRAKTDAPGC</sequence>
<keyword id="KW-0002">3D-structure</keyword>
<keyword id="KW-0020">Allergen</keyword>
<keyword id="KW-0903">Direct protein sequencing</keyword>
<keyword id="KW-1015">Disulfide bond</keyword>
<keyword id="KW-0325">Glycoprotein</keyword>
<keyword id="KW-0479">Metal-binding</keyword>
<keyword id="KW-0964">Secreted</keyword>
<keyword id="KW-0862">Zinc</keyword>
<feature type="chain" id="PRO_0000215117" description="Major pollen allergen Pla l 1">
    <location>
        <begin position="1"/>
        <end position="131"/>
    </location>
</feature>
<feature type="binding site" evidence="1 3">
    <location>
        <position position="21"/>
    </location>
    <ligand>
        <name>Zn(2+)</name>
        <dbReference type="ChEBI" id="CHEBI:29105"/>
    </ligand>
</feature>
<feature type="binding site" evidence="1 3">
    <location>
        <position position="45"/>
    </location>
    <ligand>
        <name>Zn(2+)</name>
        <dbReference type="ChEBI" id="CHEBI:29105"/>
    </ligand>
</feature>
<feature type="binding site" evidence="1 3">
    <location>
        <position position="73"/>
    </location>
    <ligand>
        <name>Zn(2+)</name>
        <dbReference type="ChEBI" id="CHEBI:29105"/>
    </ligand>
</feature>
<feature type="binding site" evidence="1 3">
    <location>
        <position position="88"/>
    </location>
    <ligand>
        <name>Zn(2+)</name>
        <dbReference type="ChEBI" id="CHEBI:29105"/>
    </ligand>
</feature>
<feature type="glycosylation site" description="N-linked (GlcNAc...) asparagine" evidence="2">
    <location>
        <position position="107"/>
    </location>
</feature>
<feature type="disulfide bond" evidence="1 3">
    <location>
        <begin position="17"/>
        <end position="86"/>
    </location>
</feature>
<feature type="disulfide bond" evidence="1 3">
    <location>
        <begin position="20"/>
        <end position="131"/>
    </location>
</feature>
<feature type="disulfide bond" evidence="1 3">
    <location>
        <begin position="42"/>
        <end position="74"/>
    </location>
</feature>
<feature type="sequence variant" description="In Pla l 1.0102 and 1.0103.">
    <original>D</original>
    <variation>G</variation>
    <location>
        <position position="58"/>
    </location>
</feature>
<feature type="sequence variant" description="In Pla l 1.0103.">
    <original>S</original>
    <variation>G</variation>
    <location>
        <position position="82"/>
    </location>
</feature>
<feature type="strand" evidence="4">
    <location>
        <begin position="8"/>
        <end position="18"/>
    </location>
</feature>
<feature type="strand" evidence="4">
    <location>
        <begin position="37"/>
        <end position="42"/>
    </location>
</feature>
<feature type="strand" evidence="4">
    <location>
        <begin position="46"/>
        <end position="48"/>
    </location>
</feature>
<feature type="strand" evidence="4">
    <location>
        <begin position="51"/>
        <end position="56"/>
    </location>
</feature>
<feature type="strand" evidence="4">
    <location>
        <begin position="61"/>
        <end position="69"/>
    </location>
</feature>
<feature type="strand" evidence="4">
    <location>
        <begin position="72"/>
        <end position="80"/>
    </location>
</feature>
<feature type="strand" evidence="4">
    <location>
        <begin position="100"/>
        <end position="102"/>
    </location>
</feature>
<feature type="strand" evidence="4">
    <location>
        <begin position="106"/>
        <end position="108"/>
    </location>
</feature>
<feature type="strand" evidence="4">
    <location>
        <begin position="113"/>
        <end position="116"/>
    </location>
</feature>
<feature type="strand" evidence="4">
    <location>
        <begin position="120"/>
        <end position="123"/>
    </location>
</feature>
<feature type="strand" evidence="4">
    <location>
        <begin position="125"/>
        <end position="127"/>
    </location>
</feature>
<name>PLAL1_PLALA</name>
<reference key="1">
    <citation type="journal article" date="2003" name="Biochem. J.">
        <title>Cloning and expression of biologically active Plantago lanceolata pollen allergen Pla l 1 in the yeast Pichia pastoris.</title>
        <authorList>
            <person name="Calabozo B."/>
            <person name="Diaz-Perales A."/>
            <person name="Salcedo G."/>
            <person name="Barber D."/>
            <person name="Polo F."/>
        </authorList>
    </citation>
    <scope>NUCLEOTIDE SEQUENCE [MRNA]</scope>
    <source>
        <tissue>Pollen</tissue>
    </source>
</reference>
<reference key="2">
    <citation type="journal article" date="2001" name="Clin. Exp. Allergy">
        <title>Purification and characterization of the main allergen of Plantago lanceolata pollen, Pla l 1.</title>
        <authorList>
            <person name="Calabozo B."/>
            <person name="Barber D."/>
            <person name="Polo F."/>
        </authorList>
    </citation>
    <scope>PROTEIN SEQUENCE OF 1-18</scope>
    <source>
        <tissue>Pollen</tissue>
    </source>
</reference>
<reference key="3">
    <citation type="journal article" date="2002" name="Clin. Exp. Allergy">
        <title>Studies on the carbohydrate moiety of Pla l 1 allergen. Identification of a major N-glycan and significance for the immunoglobulin E-binding activity.</title>
        <authorList>
            <person name="Calabozo B."/>
            <person name="Barber D."/>
            <person name="Polo F."/>
        </authorList>
    </citation>
    <scope>STRUCTURE OF CARBOHYDRATE</scope>
</reference>
<reference key="4">
    <citation type="journal article" date="2017" name="J. Allergy Clin. Immunol.">
        <title>Crystal structure of Pla l 1 reveals both structural similarity and allergenic divergence within the Ole e 1-like protein family.</title>
        <authorList>
            <person name="Stemeseder T."/>
            <person name="Freier R."/>
            <person name="Wildner S."/>
            <person name="Fuchs J.E."/>
            <person name="Briza P."/>
            <person name="Lang R."/>
            <person name="Batanero E."/>
            <person name="Lidholm J."/>
            <person name="Liedl K.R."/>
            <person name="Campo P."/>
            <person name="Hawranek T."/>
            <person name="Villalba M."/>
            <person name="Brandstetter H."/>
            <person name="Ferreira F."/>
            <person name="Gadermaier G."/>
        </authorList>
    </citation>
    <scope>X-RAY CRYSTALLOGRAPHY (1.98 ANGSTROMS) IN COMPLEX WITH ZINC</scope>
    <scope>DISULFIDE BONDS</scope>
</reference>
<proteinExistence type="evidence at protein level"/>